<protein>
    <recommendedName>
        <fullName evidence="7">6-methylpretetramide 4-monooxygenase</fullName>
        <ecNumber evidence="4">1.14.13.232</ecNumber>
    </recommendedName>
    <alternativeName>
        <fullName evidence="7">4-hydroxy-6-methylpretetramide 12a-monooxygenase</fullName>
        <ecNumber evidence="4">1.14.13.233</ecNumber>
    </alternativeName>
</protein>
<keyword id="KW-0045">Antibiotic biosynthesis</keyword>
<keyword id="KW-0274">FAD</keyword>
<keyword id="KW-0285">Flavoprotein</keyword>
<keyword id="KW-0503">Monooxygenase</keyword>
<keyword id="KW-0521">NADP</keyword>
<keyword id="KW-0560">Oxidoreductase</keyword>
<reference key="1">
    <citation type="journal article" date="2006" name="Appl. Environ. Microbiol.">
        <title>Engineered biosynthesis of a novel amidated polyketide, using the malonamyl-specific initmguPCPB_SPHCRiation module from the oxytetracycline polyketide synthase.</title>
        <authorList>
            <person name="Zhang W."/>
            <person name="Ames B.D."/>
            <person name="Tsai S.C."/>
            <person name="Tang Y."/>
        </authorList>
    </citation>
    <scope>NUCLEOTIDE SEQUENCE [GENOMIC DNA]</scope>
</reference>
<reference key="2">
    <citation type="journal article" date="2008" name="J. Am. Chem. Soc.">
        <title>Identifying the minimal enzymes required for anhydrotetracycline biosynthesis.</title>
        <authorList>
            <person name="Zhang W."/>
            <person name="Watanabe K."/>
            <person name="Cai X."/>
            <person name="Jung M.E."/>
            <person name="Tang Y."/>
            <person name="Zhan J."/>
        </authorList>
    </citation>
    <scope>FUNCTION</scope>
    <scope>CATALYTIC ACTIVITY</scope>
    <scope>DISRUPTION PHENOTYPE</scope>
    <scope>PATHWAY</scope>
</reference>
<reference key="3">
    <citation type="journal article" date="2009" name="ChemBioChem">
        <title>Identification of OxyE as an ancillary oxygenase during tetracycline biosynthesis.</title>
        <authorList>
            <person name="Wang P."/>
            <person name="Zhang W."/>
            <person name="Zhan J."/>
            <person name="Tang Y."/>
        </authorList>
    </citation>
    <scope>FUNCTION</scope>
    <scope>DISRUPTION PHENOTYPE</scope>
    <source>
        <strain>ATCC 10970</strain>
    </source>
</reference>
<proteinExistence type="evidence at protein level"/>
<name>OXYL_STRRM</name>
<dbReference type="EC" id="1.14.13.232" evidence="4"/>
<dbReference type="EC" id="1.14.13.233" evidence="4"/>
<dbReference type="EMBL" id="DQ143963">
    <property type="protein sequence ID" value="AAZ78335.1"/>
    <property type="molecule type" value="Genomic_DNA"/>
</dbReference>
<dbReference type="RefSeq" id="WP_003981029.1">
    <property type="nucleotide sequence ID" value="NZ_SADA01000149.1"/>
</dbReference>
<dbReference type="SMR" id="Q3S8Q4"/>
<dbReference type="KEGG" id="ag:AAZ78335"/>
<dbReference type="OMA" id="VECIVDY"/>
<dbReference type="BRENDA" id="1.14.13.232">
    <property type="organism ID" value="6084"/>
</dbReference>
<dbReference type="BRENDA" id="1.14.13.233">
    <property type="organism ID" value="6084"/>
</dbReference>
<dbReference type="UniPathway" id="UPA00926"/>
<dbReference type="GO" id="GO:0071949">
    <property type="term" value="F:FAD binding"/>
    <property type="evidence" value="ECO:0007669"/>
    <property type="project" value="InterPro"/>
</dbReference>
<dbReference type="GO" id="GO:0016709">
    <property type="term" value="F:oxidoreductase activity, acting on paired donors, with incorporation or reduction of molecular oxygen, NAD(P)H as one donor, and incorporation of one atom of oxygen"/>
    <property type="evidence" value="ECO:0007669"/>
    <property type="project" value="UniProtKB-ARBA"/>
</dbReference>
<dbReference type="GO" id="GO:0017000">
    <property type="term" value="P:antibiotic biosynthetic process"/>
    <property type="evidence" value="ECO:0007669"/>
    <property type="project" value="UniProtKB-KW"/>
</dbReference>
<dbReference type="Gene3D" id="3.30.70.2450">
    <property type="match status" value="1"/>
</dbReference>
<dbReference type="Gene3D" id="3.40.30.120">
    <property type="match status" value="1"/>
</dbReference>
<dbReference type="Gene3D" id="3.50.50.60">
    <property type="entry name" value="FAD/NAD(P)-binding domain"/>
    <property type="match status" value="1"/>
</dbReference>
<dbReference type="InterPro" id="IPR002938">
    <property type="entry name" value="FAD-bd"/>
</dbReference>
<dbReference type="InterPro" id="IPR036188">
    <property type="entry name" value="FAD/NAD-bd_sf"/>
</dbReference>
<dbReference type="InterPro" id="IPR050641">
    <property type="entry name" value="RIFMO-like"/>
</dbReference>
<dbReference type="PANTHER" id="PTHR43004:SF19">
    <property type="entry name" value="BINDING MONOOXYGENASE, PUTATIVE (JCVI)-RELATED"/>
    <property type="match status" value="1"/>
</dbReference>
<dbReference type="PANTHER" id="PTHR43004">
    <property type="entry name" value="TRK SYSTEM POTASSIUM UPTAKE PROTEIN"/>
    <property type="match status" value="1"/>
</dbReference>
<dbReference type="Pfam" id="PF01494">
    <property type="entry name" value="FAD_binding_3"/>
    <property type="match status" value="1"/>
</dbReference>
<dbReference type="PRINTS" id="PR00420">
    <property type="entry name" value="RNGMNOXGNASE"/>
</dbReference>
<dbReference type="SUPFAM" id="SSF51905">
    <property type="entry name" value="FAD/NAD(P)-binding domain"/>
    <property type="match status" value="1"/>
</dbReference>
<accession>Q3S8Q4</accession>
<comment type="function">
    <text evidence="4 5">Involved in the biosynthesis of the tetracycline antibiotic, oxytetracycline. Catalyzes the double hydroxylation of 6-methylpretetramide to yield 4-keto-anhydrotetracycline, via the insertion of oxygen atoms at the C-12a and C-4 positions of 6-pretetramid.</text>
</comment>
<comment type="catalytic activity">
    <reaction evidence="4">
        <text>6-methylpretetramide + NADPH + O2 + 2 H(+) = 4-hydroxy-6-methylpretetramide + NADP(+) + H2O</text>
        <dbReference type="Rhea" id="RHEA:50008"/>
        <dbReference type="ChEBI" id="CHEBI:15377"/>
        <dbReference type="ChEBI" id="CHEBI:15378"/>
        <dbReference type="ChEBI" id="CHEBI:15379"/>
        <dbReference type="ChEBI" id="CHEBI:28464"/>
        <dbReference type="ChEBI" id="CHEBI:57783"/>
        <dbReference type="ChEBI" id="CHEBI:58349"/>
        <dbReference type="ChEBI" id="CHEBI:132734"/>
        <dbReference type="EC" id="1.14.13.232"/>
    </reaction>
</comment>
<comment type="catalytic activity">
    <reaction evidence="4">
        <text>4-hydroxy-6-methylpretetramide + NADPH + O2 = 4-dedimethylamino-4-oxo-anhydrotetracycline + NADP(+) + H2O</text>
        <dbReference type="Rhea" id="RHEA:50356"/>
        <dbReference type="ChEBI" id="CHEBI:15377"/>
        <dbReference type="ChEBI" id="CHEBI:15379"/>
        <dbReference type="ChEBI" id="CHEBI:28464"/>
        <dbReference type="ChEBI" id="CHEBI:57783"/>
        <dbReference type="ChEBI" id="CHEBI:58349"/>
        <dbReference type="ChEBI" id="CHEBI:132737"/>
        <dbReference type="EC" id="1.14.13.233"/>
    </reaction>
</comment>
<comment type="cofactor">
    <cofactor evidence="1">
        <name>FAD</name>
        <dbReference type="ChEBI" id="CHEBI:57692"/>
    </cofactor>
</comment>
<comment type="pathway">
    <text evidence="9">Antibiotic biosynthesis; oxytetracycline biosynthesis.</text>
</comment>
<comment type="disruption phenotype">
    <text evidence="4 5">Cells lacking this gene are unable to produce the tetracycline intermediate anhydrotetracycline (ATC).</text>
</comment>
<comment type="miscellaneous">
    <text evidence="10">The OxyL-catalyzed conversion of 6-methylpretetramide to 4-keto-anhydrotetracycline is incomplete, either due to low protein expression levels and/or the slow reaction kinetics. Consequently, the biosynthetic intermediate 4-hydroxyl-6-methylpretetramide can be subjected to actions of endogenous enzymes that are not associated with the pathway and lead to formation of shunt products. OxyE thus serves as the ancillary enzyme to assist in the hydroxylation of C-4.</text>
</comment>
<comment type="similarity">
    <text evidence="8">Belongs to the PheA/TfdB FAD monooxygenase family.</text>
</comment>
<organism>
    <name type="scientific">Streptomyces rimosus</name>
    <dbReference type="NCBI Taxonomy" id="1927"/>
    <lineage>
        <taxon>Bacteria</taxon>
        <taxon>Bacillati</taxon>
        <taxon>Actinomycetota</taxon>
        <taxon>Actinomycetes</taxon>
        <taxon>Kitasatosporales</taxon>
        <taxon>Streptomycetaceae</taxon>
        <taxon>Streptomyces</taxon>
    </lineage>
</organism>
<feature type="chain" id="PRO_0000442357" description="6-methylpretetramide 4-monooxygenase">
    <location>
        <begin position="1"/>
        <end position="557"/>
    </location>
</feature>
<feature type="region of interest" description="Disordered" evidence="3">
    <location>
        <begin position="530"/>
        <end position="557"/>
    </location>
</feature>
<feature type="binding site" evidence="2">
    <location>
        <begin position="9"/>
        <end position="38"/>
    </location>
    <ligand>
        <name>FAD</name>
        <dbReference type="ChEBI" id="CHEBI:57692"/>
    </ligand>
</feature>
<feature type="binding site" evidence="2">
    <location>
        <begin position="278"/>
        <end position="288"/>
    </location>
    <ligand>
        <name>FAD</name>
        <dbReference type="ChEBI" id="CHEBI:57692"/>
    </ligand>
</feature>
<gene>
    <name evidence="6" type="primary">oxyL</name>
</gene>
<evidence type="ECO:0000250" key="1">
    <source>
        <dbReference type="UniProtKB" id="P42535"/>
    </source>
</evidence>
<evidence type="ECO:0000255" key="2"/>
<evidence type="ECO:0000256" key="3">
    <source>
        <dbReference type="SAM" id="MobiDB-lite"/>
    </source>
</evidence>
<evidence type="ECO:0000269" key="4">
    <source>
    </source>
</evidence>
<evidence type="ECO:0000269" key="5">
    <source>
    </source>
</evidence>
<evidence type="ECO:0000303" key="6">
    <source>
    </source>
</evidence>
<evidence type="ECO:0000303" key="7">
    <source>
    </source>
</evidence>
<evidence type="ECO:0000305" key="8"/>
<evidence type="ECO:0000305" key="9">
    <source>
    </source>
</evidence>
<evidence type="ECO:0000305" key="10">
    <source>
    </source>
</evidence>
<sequence length="557" mass="59624">MPPEADGPQVLIAGAGPVGLTLAHELTRRRVRVRVIDRADGPATTSRALAVHPRTLEACHQMGLADALVARGRPVVHFTVHLRGRQLIRFDTNYGRLPTAYPFSLMLDQVRTEEILRERLAGLGVGIEWGVELADCAPCGDRVNAELRRDGRSEQVTVPWLVGADGSRSTVRERLGLRLVGDATQTWLNADVVLDADLSRDSNHLVHTGSGTVLLVPFPDPGKWRAVDTGYAGQGADPETVRRRLAGSLARGLGRPVAVSEPTWVSVFRVQQRMITAMRSGRCFVAGDAAHVHSPASGQGMNTGMQDAYNLAWKLADVVRGHAREELLDTYAAERIPVGGRLLSSTRTATALVALRNAVAPVAMPVGLSFLKAVRPLKRRVEHRIMAGMSGLALHYADSPLTYGTGDGAAGVHPGHLVACTEQDVARHPGLRALRQALTDPRWLLLLFADDGGAAELALRYGRAVQIRTVIPHEDEDGPALADPDDALRQTLGVPPGGWALIRPDGYLAAKGQRSGTTTLTARLQALHLLPEDTAPGAGDSAGRPAPDGTRRGVTTE</sequence>